<keyword id="KW-1185">Reference proteome</keyword>
<keyword id="KW-0687">Ribonucleoprotein</keyword>
<keyword id="KW-0689">Ribosomal protein</keyword>
<keyword id="KW-0694">RNA-binding</keyword>
<keyword id="KW-0699">rRNA-binding</keyword>
<evidence type="ECO:0000255" key="1">
    <source>
        <dbReference type="HAMAP-Rule" id="MF_00537"/>
    </source>
</evidence>
<evidence type="ECO:0000305" key="2"/>
<reference key="1">
    <citation type="journal article" date="2004" name="Proc. Natl. Acad. Sci. U.S.A.">
        <title>Genome sequence of the deep-sea gamma-proteobacterium Idiomarina loihiensis reveals amino acid fermentation as a source of carbon and energy.</title>
        <authorList>
            <person name="Hou S."/>
            <person name="Saw J.H."/>
            <person name="Lee K.S."/>
            <person name="Freitas T.A."/>
            <person name="Belisle C."/>
            <person name="Kawarabayasi Y."/>
            <person name="Donachie S.P."/>
            <person name="Pikina A."/>
            <person name="Galperin M.Y."/>
            <person name="Koonin E.V."/>
            <person name="Makarova K.S."/>
            <person name="Omelchenko M.V."/>
            <person name="Sorokin A."/>
            <person name="Wolf Y.I."/>
            <person name="Li Q.X."/>
            <person name="Keum Y.S."/>
            <person name="Campbell S."/>
            <person name="Denery J."/>
            <person name="Aizawa S."/>
            <person name="Shibata S."/>
            <person name="Malahoff A."/>
            <person name="Alam M."/>
        </authorList>
    </citation>
    <scope>NUCLEOTIDE SEQUENCE [LARGE SCALE GENOMIC DNA]</scope>
    <source>
        <strain>ATCC BAA-735 / DSM 15497 / L2-TR</strain>
    </source>
</reference>
<sequence>MAKQSMKARDVKRAKIASKYAEKRNALKTVINDPKASDEERWEAVLKLQQLPRDASPTRQRNRCRITGRPHGFLRKFGMSRIKVREMAMRGEIPGLKKASW</sequence>
<accession>Q5QXX1</accession>
<protein>
    <recommendedName>
        <fullName evidence="1">Small ribosomal subunit protein uS14</fullName>
    </recommendedName>
    <alternativeName>
        <fullName evidence="2">30S ribosomal protein S14</fullName>
    </alternativeName>
</protein>
<dbReference type="EMBL" id="AE017340">
    <property type="protein sequence ID" value="AAV82735.1"/>
    <property type="molecule type" value="Genomic_DNA"/>
</dbReference>
<dbReference type="RefSeq" id="WP_011235134.1">
    <property type="nucleotide sequence ID" value="NC_006512.1"/>
</dbReference>
<dbReference type="SMR" id="Q5QXX1"/>
<dbReference type="STRING" id="283942.IL1903"/>
<dbReference type="GeneID" id="78252623"/>
<dbReference type="KEGG" id="ilo:IL1903"/>
<dbReference type="eggNOG" id="COG0199">
    <property type="taxonomic scope" value="Bacteria"/>
</dbReference>
<dbReference type="HOGENOM" id="CLU_139869_0_1_6"/>
<dbReference type="OrthoDB" id="9810484at2"/>
<dbReference type="Proteomes" id="UP000001171">
    <property type="component" value="Chromosome"/>
</dbReference>
<dbReference type="GO" id="GO:0005737">
    <property type="term" value="C:cytoplasm"/>
    <property type="evidence" value="ECO:0007669"/>
    <property type="project" value="UniProtKB-ARBA"/>
</dbReference>
<dbReference type="GO" id="GO:0015935">
    <property type="term" value="C:small ribosomal subunit"/>
    <property type="evidence" value="ECO:0007669"/>
    <property type="project" value="TreeGrafter"/>
</dbReference>
<dbReference type="GO" id="GO:0019843">
    <property type="term" value="F:rRNA binding"/>
    <property type="evidence" value="ECO:0007669"/>
    <property type="project" value="UniProtKB-UniRule"/>
</dbReference>
<dbReference type="GO" id="GO:0003735">
    <property type="term" value="F:structural constituent of ribosome"/>
    <property type="evidence" value="ECO:0007669"/>
    <property type="project" value="InterPro"/>
</dbReference>
<dbReference type="GO" id="GO:0006412">
    <property type="term" value="P:translation"/>
    <property type="evidence" value="ECO:0007669"/>
    <property type="project" value="UniProtKB-UniRule"/>
</dbReference>
<dbReference type="FunFam" id="1.10.287.1480:FF:000001">
    <property type="entry name" value="30S ribosomal protein S14"/>
    <property type="match status" value="1"/>
</dbReference>
<dbReference type="Gene3D" id="1.10.287.1480">
    <property type="match status" value="1"/>
</dbReference>
<dbReference type="HAMAP" id="MF_00537">
    <property type="entry name" value="Ribosomal_uS14_1"/>
    <property type="match status" value="1"/>
</dbReference>
<dbReference type="InterPro" id="IPR001209">
    <property type="entry name" value="Ribosomal_uS14"/>
</dbReference>
<dbReference type="InterPro" id="IPR023036">
    <property type="entry name" value="Ribosomal_uS14_bac/plastid"/>
</dbReference>
<dbReference type="InterPro" id="IPR018271">
    <property type="entry name" value="Ribosomal_uS14_CS"/>
</dbReference>
<dbReference type="NCBIfam" id="NF006477">
    <property type="entry name" value="PRK08881.1"/>
    <property type="match status" value="1"/>
</dbReference>
<dbReference type="PANTHER" id="PTHR19836">
    <property type="entry name" value="30S RIBOSOMAL PROTEIN S14"/>
    <property type="match status" value="1"/>
</dbReference>
<dbReference type="PANTHER" id="PTHR19836:SF19">
    <property type="entry name" value="SMALL RIBOSOMAL SUBUNIT PROTEIN US14M"/>
    <property type="match status" value="1"/>
</dbReference>
<dbReference type="Pfam" id="PF00253">
    <property type="entry name" value="Ribosomal_S14"/>
    <property type="match status" value="1"/>
</dbReference>
<dbReference type="SUPFAM" id="SSF57716">
    <property type="entry name" value="Glucocorticoid receptor-like (DNA-binding domain)"/>
    <property type="match status" value="1"/>
</dbReference>
<dbReference type="PROSITE" id="PS00527">
    <property type="entry name" value="RIBOSOMAL_S14"/>
    <property type="match status" value="1"/>
</dbReference>
<name>RS14_IDILO</name>
<comment type="function">
    <text evidence="1">Binds 16S rRNA, required for the assembly of 30S particles and may also be responsible for determining the conformation of the 16S rRNA at the A site.</text>
</comment>
<comment type="subunit">
    <text evidence="1">Part of the 30S ribosomal subunit. Contacts proteins S3 and S10.</text>
</comment>
<comment type="similarity">
    <text evidence="1">Belongs to the universal ribosomal protein uS14 family.</text>
</comment>
<organism>
    <name type="scientific">Idiomarina loihiensis (strain ATCC BAA-735 / DSM 15497 / L2-TR)</name>
    <dbReference type="NCBI Taxonomy" id="283942"/>
    <lineage>
        <taxon>Bacteria</taxon>
        <taxon>Pseudomonadati</taxon>
        <taxon>Pseudomonadota</taxon>
        <taxon>Gammaproteobacteria</taxon>
        <taxon>Alteromonadales</taxon>
        <taxon>Idiomarinaceae</taxon>
        <taxon>Idiomarina</taxon>
    </lineage>
</organism>
<proteinExistence type="inferred from homology"/>
<feature type="chain" id="PRO_1000128423" description="Small ribosomal subunit protein uS14">
    <location>
        <begin position="1"/>
        <end position="101"/>
    </location>
</feature>
<gene>
    <name evidence="1" type="primary">rpsN</name>
    <name type="ordered locus">IL1903</name>
</gene>